<dbReference type="EMBL" id="CP000113">
    <property type="protein sequence ID" value="ABF89278.1"/>
    <property type="molecule type" value="Genomic_DNA"/>
</dbReference>
<dbReference type="RefSeq" id="WP_011553066.1">
    <property type="nucleotide sequence ID" value="NC_008095.1"/>
</dbReference>
<dbReference type="SMR" id="Q1D804"/>
<dbReference type="STRING" id="246197.MXAN_3010"/>
<dbReference type="EnsemblBacteria" id="ABF89278">
    <property type="protein sequence ID" value="ABF89278"/>
    <property type="gene ID" value="MXAN_3010"/>
</dbReference>
<dbReference type="GeneID" id="41360371"/>
<dbReference type="KEGG" id="mxa:MXAN_3010"/>
<dbReference type="eggNOG" id="COG4974">
    <property type="taxonomic scope" value="Bacteria"/>
</dbReference>
<dbReference type="HOGENOM" id="CLU_027562_9_0_7"/>
<dbReference type="OrthoDB" id="9801717at2"/>
<dbReference type="Proteomes" id="UP000002402">
    <property type="component" value="Chromosome"/>
</dbReference>
<dbReference type="GO" id="GO:0005737">
    <property type="term" value="C:cytoplasm"/>
    <property type="evidence" value="ECO:0007669"/>
    <property type="project" value="UniProtKB-SubCell"/>
</dbReference>
<dbReference type="GO" id="GO:0003677">
    <property type="term" value="F:DNA binding"/>
    <property type="evidence" value="ECO:0007669"/>
    <property type="project" value="UniProtKB-KW"/>
</dbReference>
<dbReference type="GO" id="GO:0009037">
    <property type="term" value="F:tyrosine-based site-specific recombinase activity"/>
    <property type="evidence" value="ECO:0007669"/>
    <property type="project" value="UniProtKB-UniRule"/>
</dbReference>
<dbReference type="GO" id="GO:0051301">
    <property type="term" value="P:cell division"/>
    <property type="evidence" value="ECO:0007669"/>
    <property type="project" value="UniProtKB-KW"/>
</dbReference>
<dbReference type="GO" id="GO:0007059">
    <property type="term" value="P:chromosome segregation"/>
    <property type="evidence" value="ECO:0007669"/>
    <property type="project" value="UniProtKB-UniRule"/>
</dbReference>
<dbReference type="GO" id="GO:0006313">
    <property type="term" value="P:DNA transposition"/>
    <property type="evidence" value="ECO:0007669"/>
    <property type="project" value="UniProtKB-UniRule"/>
</dbReference>
<dbReference type="CDD" id="cd00798">
    <property type="entry name" value="INT_XerDC_C"/>
    <property type="match status" value="1"/>
</dbReference>
<dbReference type="Gene3D" id="1.10.150.130">
    <property type="match status" value="1"/>
</dbReference>
<dbReference type="Gene3D" id="1.10.443.10">
    <property type="entry name" value="Intergrase catalytic core"/>
    <property type="match status" value="1"/>
</dbReference>
<dbReference type="HAMAP" id="MF_01808">
    <property type="entry name" value="Recomb_XerC_XerD"/>
    <property type="match status" value="1"/>
</dbReference>
<dbReference type="InterPro" id="IPR044068">
    <property type="entry name" value="CB"/>
</dbReference>
<dbReference type="InterPro" id="IPR011010">
    <property type="entry name" value="DNA_brk_join_enz"/>
</dbReference>
<dbReference type="InterPro" id="IPR013762">
    <property type="entry name" value="Integrase-like_cat_sf"/>
</dbReference>
<dbReference type="InterPro" id="IPR002104">
    <property type="entry name" value="Integrase_catalytic"/>
</dbReference>
<dbReference type="InterPro" id="IPR010998">
    <property type="entry name" value="Integrase_recombinase_N"/>
</dbReference>
<dbReference type="InterPro" id="IPR004107">
    <property type="entry name" value="Integrase_SAM-like_N"/>
</dbReference>
<dbReference type="InterPro" id="IPR023009">
    <property type="entry name" value="Tyrosine_recombinase_XerC/XerD"/>
</dbReference>
<dbReference type="InterPro" id="IPR050090">
    <property type="entry name" value="Tyrosine_recombinase_XerCD"/>
</dbReference>
<dbReference type="NCBIfam" id="NF001399">
    <property type="entry name" value="PRK00283.1"/>
    <property type="match status" value="1"/>
</dbReference>
<dbReference type="PANTHER" id="PTHR30349">
    <property type="entry name" value="PHAGE INTEGRASE-RELATED"/>
    <property type="match status" value="1"/>
</dbReference>
<dbReference type="PANTHER" id="PTHR30349:SF77">
    <property type="entry name" value="TYROSINE RECOMBINASE XERC"/>
    <property type="match status" value="1"/>
</dbReference>
<dbReference type="Pfam" id="PF02899">
    <property type="entry name" value="Phage_int_SAM_1"/>
    <property type="match status" value="1"/>
</dbReference>
<dbReference type="Pfam" id="PF00589">
    <property type="entry name" value="Phage_integrase"/>
    <property type="match status" value="1"/>
</dbReference>
<dbReference type="SUPFAM" id="SSF56349">
    <property type="entry name" value="DNA breaking-rejoining enzymes"/>
    <property type="match status" value="1"/>
</dbReference>
<dbReference type="SUPFAM" id="SSF47823">
    <property type="entry name" value="lambda integrase-like, N-terminal domain"/>
    <property type="match status" value="1"/>
</dbReference>
<dbReference type="PROSITE" id="PS51900">
    <property type="entry name" value="CB"/>
    <property type="match status" value="1"/>
</dbReference>
<dbReference type="PROSITE" id="PS51898">
    <property type="entry name" value="TYR_RECOMBINASE"/>
    <property type="match status" value="1"/>
</dbReference>
<keyword id="KW-0131">Cell cycle</keyword>
<keyword id="KW-0132">Cell division</keyword>
<keyword id="KW-0159">Chromosome partition</keyword>
<keyword id="KW-0963">Cytoplasm</keyword>
<keyword id="KW-0229">DNA integration</keyword>
<keyword id="KW-0233">DNA recombination</keyword>
<keyword id="KW-0238">DNA-binding</keyword>
<keyword id="KW-1185">Reference proteome</keyword>
<feature type="chain" id="PRO_1000070018" description="Tyrosine recombinase XerC">
    <location>
        <begin position="1"/>
        <end position="300"/>
    </location>
</feature>
<feature type="domain" description="Core-binding (CB)" evidence="3">
    <location>
        <begin position="2"/>
        <end position="87"/>
    </location>
</feature>
<feature type="domain" description="Tyr recombinase" evidence="2">
    <location>
        <begin position="108"/>
        <end position="294"/>
    </location>
</feature>
<feature type="active site" evidence="1">
    <location>
        <position position="148"/>
    </location>
</feature>
<feature type="active site" evidence="1">
    <location>
        <position position="172"/>
    </location>
</feature>
<feature type="active site" evidence="1">
    <location>
        <position position="246"/>
    </location>
</feature>
<feature type="active site" evidence="1">
    <location>
        <position position="249"/>
    </location>
</feature>
<feature type="active site" evidence="1">
    <location>
        <position position="272"/>
    </location>
</feature>
<feature type="active site" description="O-(3'-phospho-DNA)-tyrosine intermediate" evidence="1">
    <location>
        <position position="281"/>
    </location>
</feature>
<proteinExistence type="inferred from homology"/>
<name>XERC_MYXXD</name>
<evidence type="ECO:0000255" key="1">
    <source>
        <dbReference type="HAMAP-Rule" id="MF_01808"/>
    </source>
</evidence>
<evidence type="ECO:0000255" key="2">
    <source>
        <dbReference type="PROSITE-ProRule" id="PRU01246"/>
    </source>
</evidence>
<evidence type="ECO:0000255" key="3">
    <source>
        <dbReference type="PROSITE-ProRule" id="PRU01248"/>
    </source>
</evidence>
<reference key="1">
    <citation type="journal article" date="2006" name="Proc. Natl. Acad. Sci. U.S.A.">
        <title>Evolution of sensory complexity recorded in a myxobacterial genome.</title>
        <authorList>
            <person name="Goldman B.S."/>
            <person name="Nierman W.C."/>
            <person name="Kaiser D."/>
            <person name="Slater S.C."/>
            <person name="Durkin A.S."/>
            <person name="Eisen J.A."/>
            <person name="Ronning C.M."/>
            <person name="Barbazuk W.B."/>
            <person name="Blanchard M."/>
            <person name="Field C."/>
            <person name="Halling C."/>
            <person name="Hinkle G."/>
            <person name="Iartchuk O."/>
            <person name="Kim H.S."/>
            <person name="Mackenzie C."/>
            <person name="Madupu R."/>
            <person name="Miller N."/>
            <person name="Shvartsbeyn A."/>
            <person name="Sullivan S.A."/>
            <person name="Vaudin M."/>
            <person name="Wiegand R."/>
            <person name="Kaplan H.B."/>
        </authorList>
    </citation>
    <scope>NUCLEOTIDE SEQUENCE [LARGE SCALE GENOMIC DNA]</scope>
    <source>
        <strain>DK1622</strain>
    </source>
</reference>
<accession>Q1D804</accession>
<comment type="function">
    <text evidence="1">Site-specific tyrosine recombinase, which acts by catalyzing the cutting and rejoining of the recombining DNA molecules. The XerC-XerD complex is essential to convert dimers of the bacterial chromosome into monomers to permit their segregation at cell division. It also contributes to the segregational stability of plasmids.</text>
</comment>
<comment type="subunit">
    <text evidence="1">Forms a cyclic heterotetrameric complex composed of two molecules of XerC and two molecules of XerD.</text>
</comment>
<comment type="subcellular location">
    <subcellularLocation>
        <location evidence="1">Cytoplasm</location>
    </subcellularLocation>
</comment>
<comment type="similarity">
    <text evidence="1">Belongs to the 'phage' integrase family. XerC subfamily.</text>
</comment>
<protein>
    <recommendedName>
        <fullName evidence="1">Tyrosine recombinase XerC</fullName>
    </recommendedName>
</protein>
<sequence>MTSLSPLLEKFRAHLEDEKGSSPHTVRNYLIDLVDFERYLVERMKLSLLSGTHAAIRGYLGTLSTDHAPASRARRLASIKSFYKYLVRQKLLPASPAKLVKSPKLPKTLPKVLPVEEVFAILDMPDVKTVLGLRDRAILELLYGGGLRISELCGLDLLDIDRSGRIVRVMGKGSKERLVPVNAQSIRALEAYLARRGELLATIRKDQAPEAMFLNFRGGRLTPRSIARHLDTYVLKCALTRKVSPHAMRHSFATHLLGGGADIRSIQELLGHSSLSTTQRYTQVTWEQLQQVYDSAHPRA</sequence>
<gene>
    <name evidence="1" type="primary">xerC</name>
    <name type="ordered locus">MXAN_3010</name>
</gene>
<organism>
    <name type="scientific">Myxococcus xanthus (strain DK1622)</name>
    <dbReference type="NCBI Taxonomy" id="246197"/>
    <lineage>
        <taxon>Bacteria</taxon>
        <taxon>Pseudomonadati</taxon>
        <taxon>Myxococcota</taxon>
        <taxon>Myxococcia</taxon>
        <taxon>Myxococcales</taxon>
        <taxon>Cystobacterineae</taxon>
        <taxon>Myxococcaceae</taxon>
        <taxon>Myxococcus</taxon>
    </lineage>
</organism>